<name>GYRA_MYCBP</name>
<sequence length="838" mass="92345">MTDTTLPPDDSLDRIEPVDIQQEMQRSYIDYAMSVIVGRALPEVRDGLKPVHRRVLYAMFDSGFRPDRSHAKSARSVAETMGNYHPHGDASIYDTLVRMAQPWSLRYPLVDGQGNFGSPGNDPPAAMRYTEARLTPLAMEMLREIDEETVDFIPNYDGRVQEPTVLPSRFPNLLANGSGGIAVGMATNIPPHNLRELADAVFWALENHDADEEETLAAVMGRVKGPDFPTAGLIVGSQGTADAYKTGRGSIRMRGVVEVEEDSRGRTSLVITELPYQVNHDNFITSIAEQVRDGKLAGISNIEDQSSDRVGLRIVIEIKRDAVAKVVINNLYKHTQLQTSFGANMLAIVDGVPRTLRLDQLIRYYVDHQLDVIVRRTTYRLRKANERAHILRGLVKALDALDEVIALIRASETVDIARAGLIELLDIDEIQAQAILDMQLRRLAALERQRIIDDLAKIEAEIADLEDILAKPERQRGIVRDELAEIVDRHGDDRRTRIIAADGDVSDEDLIAREDVVVTITETGYAKRTKTDLYRSQKRGGKGVQGAGLKQDDIVAHFFVCSTHDLILFFTTQGRVYRAKAYDLPEASRTARGQHVANLLAFQPEERIAQVIQIRGYTDAPYLVLATRNGLVKKSKLTDFDSNRSGGIVAVNLRDNDELVGAVLCSADDDLLLVSANGQSIRFSATDEALRPMGRATSGVQGMRFNIDDRLLSLNVVREGTYLLVATSGGYAKRTAIEEYPVQGRGGKGVLTVMYDRRRGRLVGALIVDDDSELYAVTSGGGVIRTAARQVRKAGRQTKGVRLMNLGEGDTLLAIARNAEESGDDNAVDANGADQTGN</sequence>
<dbReference type="EC" id="5.6.2.2" evidence="1"/>
<dbReference type="EMBL" id="AM408590">
    <property type="protein sequence ID" value="CAL69990.1"/>
    <property type="molecule type" value="Genomic_DNA"/>
</dbReference>
<dbReference type="EMBL" id="AM408590">
    <property type="protein sequence ID" value="CAL70020.1"/>
    <property type="molecule type" value="Genomic_DNA"/>
</dbReference>
<dbReference type="SMR" id="A0A0G2Q9F8"/>
<dbReference type="KEGG" id="mbb:BCG_0006"/>
<dbReference type="KEGG" id="mbb:BCG_0036"/>
<dbReference type="HOGENOM" id="CLU_002977_6_1_11"/>
<dbReference type="Proteomes" id="UP000001472">
    <property type="component" value="Chromosome"/>
</dbReference>
<dbReference type="GO" id="GO:0005694">
    <property type="term" value="C:chromosome"/>
    <property type="evidence" value="ECO:0007669"/>
    <property type="project" value="InterPro"/>
</dbReference>
<dbReference type="GO" id="GO:0005737">
    <property type="term" value="C:cytoplasm"/>
    <property type="evidence" value="ECO:0007669"/>
    <property type="project" value="UniProtKB-SubCell"/>
</dbReference>
<dbReference type="GO" id="GO:0009330">
    <property type="term" value="C:DNA topoisomerase type II (double strand cut, ATP-hydrolyzing) complex"/>
    <property type="evidence" value="ECO:0007669"/>
    <property type="project" value="TreeGrafter"/>
</dbReference>
<dbReference type="GO" id="GO:0005524">
    <property type="term" value="F:ATP binding"/>
    <property type="evidence" value="ECO:0007669"/>
    <property type="project" value="UniProtKB-UniRule"/>
</dbReference>
<dbReference type="GO" id="GO:0003677">
    <property type="term" value="F:DNA binding"/>
    <property type="evidence" value="ECO:0007669"/>
    <property type="project" value="UniProtKB-UniRule"/>
</dbReference>
<dbReference type="GO" id="GO:0034335">
    <property type="term" value="F:DNA negative supercoiling activity"/>
    <property type="evidence" value="ECO:0000314"/>
    <property type="project" value="UniProtKB"/>
</dbReference>
<dbReference type="GO" id="GO:0006265">
    <property type="term" value="P:DNA topological change"/>
    <property type="evidence" value="ECO:0007669"/>
    <property type="project" value="UniProtKB-UniRule"/>
</dbReference>
<dbReference type="GO" id="GO:0006261">
    <property type="term" value="P:DNA-templated DNA replication"/>
    <property type="evidence" value="ECO:0007669"/>
    <property type="project" value="UniProtKB-UniRule"/>
</dbReference>
<dbReference type="GO" id="GO:0046677">
    <property type="term" value="P:response to antibiotic"/>
    <property type="evidence" value="ECO:0007669"/>
    <property type="project" value="UniProtKB-KW"/>
</dbReference>
<dbReference type="CDD" id="cd00187">
    <property type="entry name" value="TOP4c"/>
    <property type="match status" value="1"/>
</dbReference>
<dbReference type="FunFam" id="1.10.268.10:FF:000001">
    <property type="entry name" value="DNA gyrase subunit A"/>
    <property type="match status" value="1"/>
</dbReference>
<dbReference type="FunFam" id="2.120.10.90:FF:000001">
    <property type="entry name" value="DNA gyrase subunit A"/>
    <property type="match status" value="1"/>
</dbReference>
<dbReference type="FunFam" id="3.90.199.10:FF:000010">
    <property type="entry name" value="DNA gyrase subunit A"/>
    <property type="match status" value="1"/>
</dbReference>
<dbReference type="FunFam" id="3.30.1360.40:FF:000008">
    <property type="entry name" value="DNA topoisomerase (ATP-hydrolyzing)"/>
    <property type="match status" value="1"/>
</dbReference>
<dbReference type="Gene3D" id="3.30.1360.40">
    <property type="match status" value="1"/>
</dbReference>
<dbReference type="Gene3D" id="2.120.10.90">
    <property type="entry name" value="DNA gyrase/topoisomerase IV, subunit A, C-terminal"/>
    <property type="match status" value="1"/>
</dbReference>
<dbReference type="Gene3D" id="3.90.199.10">
    <property type="entry name" value="Topoisomerase II, domain 5"/>
    <property type="match status" value="1"/>
</dbReference>
<dbReference type="Gene3D" id="1.10.268.10">
    <property type="entry name" value="Topoisomerase, domain 3"/>
    <property type="match status" value="1"/>
</dbReference>
<dbReference type="HAMAP" id="MF_01897">
    <property type="entry name" value="GyrA"/>
    <property type="match status" value="1"/>
</dbReference>
<dbReference type="InterPro" id="IPR005743">
    <property type="entry name" value="GyrA"/>
</dbReference>
<dbReference type="InterPro" id="IPR006691">
    <property type="entry name" value="GyrA/parC_rep"/>
</dbReference>
<dbReference type="InterPro" id="IPR035516">
    <property type="entry name" value="Gyrase/topoIV_suA_C"/>
</dbReference>
<dbReference type="InterPro" id="IPR013760">
    <property type="entry name" value="Topo_IIA-like_dom_sf"/>
</dbReference>
<dbReference type="InterPro" id="IPR013758">
    <property type="entry name" value="Topo_IIA_A/C_ab"/>
</dbReference>
<dbReference type="InterPro" id="IPR013757">
    <property type="entry name" value="Topo_IIA_A_a_sf"/>
</dbReference>
<dbReference type="InterPro" id="IPR002205">
    <property type="entry name" value="Topo_IIA_dom_A"/>
</dbReference>
<dbReference type="InterPro" id="IPR050220">
    <property type="entry name" value="Type_II_DNA_Topoisomerases"/>
</dbReference>
<dbReference type="NCBIfam" id="TIGR01063">
    <property type="entry name" value="gyrA"/>
    <property type="match status" value="1"/>
</dbReference>
<dbReference type="NCBIfam" id="NF004043">
    <property type="entry name" value="PRK05560.1"/>
    <property type="match status" value="1"/>
</dbReference>
<dbReference type="NCBIfam" id="NF004044">
    <property type="entry name" value="PRK05561.1"/>
    <property type="match status" value="1"/>
</dbReference>
<dbReference type="PANTHER" id="PTHR43493:SF5">
    <property type="entry name" value="DNA GYRASE SUBUNIT A, CHLOROPLASTIC_MITOCHONDRIAL"/>
    <property type="match status" value="1"/>
</dbReference>
<dbReference type="PANTHER" id="PTHR43493">
    <property type="entry name" value="DNA GYRASE/TOPOISOMERASE SUBUNIT A"/>
    <property type="match status" value="1"/>
</dbReference>
<dbReference type="Pfam" id="PF03989">
    <property type="entry name" value="DNA_gyraseA_C"/>
    <property type="match status" value="6"/>
</dbReference>
<dbReference type="Pfam" id="PF00521">
    <property type="entry name" value="DNA_topoisoIV"/>
    <property type="match status" value="1"/>
</dbReference>
<dbReference type="SMART" id="SM00434">
    <property type="entry name" value="TOP4c"/>
    <property type="match status" value="1"/>
</dbReference>
<dbReference type="SUPFAM" id="SSF101904">
    <property type="entry name" value="GyrA/ParC C-terminal domain-like"/>
    <property type="match status" value="1"/>
</dbReference>
<dbReference type="SUPFAM" id="SSF56719">
    <property type="entry name" value="Type II DNA topoisomerase"/>
    <property type="match status" value="1"/>
</dbReference>
<dbReference type="PROSITE" id="PS52040">
    <property type="entry name" value="TOPO_IIA"/>
    <property type="match status" value="1"/>
</dbReference>
<accession>A0A0G2Q9F8</accession>
<comment type="function">
    <text evidence="3">A type II topoisomerase that negatively supercoils closed circular double-stranded (ds) DNA in an ATP-dependent manner to modulate DNA topology and maintain chromosomes in an underwound state. Also catalyzes the interconversion of other topological isomers of double-stranded DNA rings, including catenanes and knotted rings. Relaxes negatively supercoiled DNA in an ATP-independent manner. A linear reaction intermediate can be trapped in the presence of the antibiotic ciprofloxacin (PubMed:7503546). Negative supercoiling favors strand separation, and DNA replication, transcription, recombination and repair, all of which involve strand separation. Type II topoisomerases break and join 2 DNA strands simultaneously in an ATP-dependent manner.</text>
</comment>
<comment type="catalytic activity">
    <reaction evidence="1">
        <text>ATP-dependent breakage, passage and rejoining of double-stranded DNA.</text>
        <dbReference type="EC" id="5.6.2.2"/>
    </reaction>
</comment>
<comment type="cofactor">
    <cofactor evidence="3">
        <name>Mg(2+)</name>
        <dbReference type="ChEBI" id="CHEBI:18420"/>
    </cofactor>
    <text evidence="3">Reaction requires Mg(2+).</text>
</comment>
<comment type="activity regulation">
    <text evidence="3">DNA supercoiling is inhibited by EDTA, novobiocin, coumermycin and ciprofloxacin (PubMed:7503546).</text>
</comment>
<comment type="subunit">
    <text evidence="1 3">Heterotetramer, composed of two GyrA and two GyrB chains (PubMed:7503546). In the heterotetramer, GyrA contains the active site tyrosine that forms a transient covalent intermediate with DNA, while GyrB binds cofactors and catalyzes ATP hydrolysis.</text>
</comment>
<comment type="subcellular location">
    <subcellularLocation>
        <location evidence="1">Cytoplasm</location>
    </subcellularLocation>
</comment>
<comment type="miscellaneous">
    <text evidence="1">Few gyrases are as efficient as E.coli at forming negative supercoils. Not all organisms have 2 type II topoisomerases; in organisms with a single type II topoisomerase this enzyme also has to decatenate newly replicated chromosomes.</text>
</comment>
<comment type="similarity">
    <text evidence="1">Belongs to the type II topoisomerase GyrA/ParC subunit family.</text>
</comment>
<gene>
    <name evidence="1" type="primary">gyrA1</name>
    <name type="ordered locus">BCG_0006</name>
</gene>
<gene>
    <name evidence="1" type="primary">gyrA2</name>
    <name type="ordered locus">BCG_0036</name>
</gene>
<proteinExistence type="evidence at protein level"/>
<keyword id="KW-0046">Antibiotic resistance</keyword>
<keyword id="KW-0067">ATP-binding</keyword>
<keyword id="KW-0963">Cytoplasm</keyword>
<keyword id="KW-0238">DNA-binding</keyword>
<keyword id="KW-0413">Isomerase</keyword>
<keyword id="KW-0547">Nucleotide-binding</keyword>
<keyword id="KW-0799">Topoisomerase</keyword>
<reference key="1">
    <citation type="journal article" date="2007" name="Proc. Natl. Acad. Sci. U.S.A.">
        <title>Genome plasticity of BCG and impact on vaccine efficacy.</title>
        <authorList>
            <person name="Brosch R."/>
            <person name="Gordon S.V."/>
            <person name="Garnier T."/>
            <person name="Eiglmeier K."/>
            <person name="Frigui W."/>
            <person name="Valenti P."/>
            <person name="Dos Santos S."/>
            <person name="Duthoy S."/>
            <person name="Lacroix C."/>
            <person name="Garcia-Pelayo C."/>
            <person name="Inwald J.K."/>
            <person name="Golby P."/>
            <person name="Garcia J.N."/>
            <person name="Hewinson R.G."/>
            <person name="Behr M.A."/>
            <person name="Quail M.A."/>
            <person name="Churcher C."/>
            <person name="Barrell B.G."/>
            <person name="Parkhill J."/>
            <person name="Cole S.T."/>
        </authorList>
    </citation>
    <scope>NUCLEOTIDE SEQUENCE [LARGE SCALE GENOMIC DNA]</scope>
    <source>
        <strain>BCG / Pasteur 1173P2</strain>
    </source>
</reference>
<reference key="2">
    <citation type="journal article" date="1994" name="Antimicrob. Agents Chemother.">
        <title>Cloning and nucleotide sequence of Mycobacterium tuberculosis gyrA and gyrB genes and detection of quinolone resistance mutations.</title>
        <authorList>
            <person name="Takiff H.E."/>
            <person name="Salazar L."/>
            <person name="Guerrero C."/>
            <person name="Philipp W."/>
            <person name="Huang W.M."/>
            <person name="Kreiswirth B."/>
            <person name="Cole S.T."/>
            <person name="Jacobs W.R. Jr."/>
            <person name="Telenti A."/>
        </authorList>
    </citation>
    <scope>POSSIBLE ANTIBIOTIC RESISTANCE</scope>
    <scope>MUTAGENESIS OF ALA-90 AND ASP-94</scope>
    <source>
        <strain>BCG / Pasteur</strain>
    </source>
</reference>
<reference key="3">
    <citation type="journal article" date="1995" name="Arch. Biochem. Biophys.">
        <title>Mycobacterial DNA gyrase: enzyme purification and characterization of supercoiling activity.</title>
        <authorList>
            <person name="Wu L.C."/>
            <person name="Shahied S.I."/>
        </authorList>
    </citation>
    <scope>FUNCTION</scope>
    <scope>COFACTOR</scope>
    <scope>ACTIVITY REGULATION</scope>
    <scope>SUBUNIT</scope>
    <scope>REACTION MECHANISM</scope>
    <source>
        <strain>BCG / ATCC 27289 / DSM 43990</strain>
    </source>
</reference>
<evidence type="ECO:0000255" key="1">
    <source>
        <dbReference type="HAMAP-Rule" id="MF_01897"/>
    </source>
</evidence>
<evidence type="ECO:0000255" key="2">
    <source>
        <dbReference type="PROSITE-ProRule" id="PRU01384"/>
    </source>
</evidence>
<evidence type="ECO:0000269" key="3">
    <source>
    </source>
</evidence>
<evidence type="ECO:0000269" key="4">
    <source>
    </source>
</evidence>
<feature type="chain" id="PRO_0000435478" description="DNA gyrase subunit A">
    <location>
        <begin position="1"/>
        <end position="838"/>
    </location>
</feature>
<feature type="domain" description="Topo IIA-type catalytic" evidence="2">
    <location>
        <begin position="41"/>
        <end position="510"/>
    </location>
</feature>
<feature type="short sequence motif" description="GyrA-box" evidence="1">
    <location>
        <begin position="537"/>
        <end position="543"/>
    </location>
</feature>
<feature type="active site" description="O-(5'-phospho-DNA)-tyrosine intermediate" evidence="1">
    <location>
        <position position="129"/>
    </location>
</feature>
<feature type="mutagenesis site" description="Probably resistant to ciprofloxacin." evidence="4">
    <original>A</original>
    <variation>V</variation>
    <location>
        <position position="90"/>
    </location>
</feature>
<feature type="mutagenesis site" description="Probably resistant to ciprofloxacin." evidence="4">
    <original>D</original>
    <variation>N</variation>
    <location>
        <position position="94"/>
    </location>
</feature>
<organism>
    <name type="scientific">Mycobacterium bovis (strain BCG / Pasteur 1173P2)</name>
    <dbReference type="NCBI Taxonomy" id="410289"/>
    <lineage>
        <taxon>Bacteria</taxon>
        <taxon>Bacillati</taxon>
        <taxon>Actinomycetota</taxon>
        <taxon>Actinomycetes</taxon>
        <taxon>Mycobacteriales</taxon>
        <taxon>Mycobacteriaceae</taxon>
        <taxon>Mycobacterium</taxon>
        <taxon>Mycobacterium tuberculosis complex</taxon>
    </lineage>
</organism>
<protein>
    <recommendedName>
        <fullName evidence="1">DNA gyrase subunit A</fullName>
        <ecNumber evidence="1">5.6.2.2</ecNumber>
    </recommendedName>
</protein>